<organism>
    <name type="scientific">Yersinia pseudotuberculosis serotype O:1b (strain IP 31758)</name>
    <dbReference type="NCBI Taxonomy" id="349747"/>
    <lineage>
        <taxon>Bacteria</taxon>
        <taxon>Pseudomonadati</taxon>
        <taxon>Pseudomonadota</taxon>
        <taxon>Gammaproteobacteria</taxon>
        <taxon>Enterobacterales</taxon>
        <taxon>Yersiniaceae</taxon>
        <taxon>Yersinia</taxon>
    </lineage>
</organism>
<sequence>MALTRLLIKDFRNIESADLALAAGFNFLVGPNGSGKTSVLEAVYTLGHGRAFRSLQAGRVIRHECAEFVLHGRVDANEREASVGLSKSRQGDTKVRIDGTDGHKVAELAQMLPMQLITPEGFTLLNGGPKFRRAFLDWGCFHNEPGFFTAWSNLKRLLKQRNAALRQVSRYTQIRAWDQEIIPLAERISEWRAAYSDAIAADISATCALFLPEFALSFSFQRGWDKESDYGELLERQFERDRALTYTAVGPHKADFRIRADGTPVEDLLSRGQLKLLMCALRLAQGEFLTRQSGRRCLYLLDDFASELDTGRRRLLAERLKATQAQVFVSAVSAEQVADMVGEKGKMFRVEHGKIEVQPQD</sequence>
<feature type="chain" id="PRO_1000059907" description="DNA replication and repair protein RecF">
    <location>
        <begin position="1"/>
        <end position="361"/>
    </location>
</feature>
<feature type="binding site" evidence="1">
    <location>
        <begin position="30"/>
        <end position="37"/>
    </location>
    <ligand>
        <name>ATP</name>
        <dbReference type="ChEBI" id="CHEBI:30616"/>
    </ligand>
</feature>
<proteinExistence type="inferred from homology"/>
<reference key="1">
    <citation type="journal article" date="2007" name="PLoS Genet.">
        <title>The complete genome sequence of Yersinia pseudotuberculosis IP31758, the causative agent of Far East scarlet-like fever.</title>
        <authorList>
            <person name="Eppinger M."/>
            <person name="Rosovitz M.J."/>
            <person name="Fricke W.F."/>
            <person name="Rasko D.A."/>
            <person name="Kokorina G."/>
            <person name="Fayolle C."/>
            <person name="Lindler L.E."/>
            <person name="Carniel E."/>
            <person name="Ravel J."/>
        </authorList>
    </citation>
    <scope>NUCLEOTIDE SEQUENCE [LARGE SCALE GENOMIC DNA]</scope>
    <source>
        <strain>IP 31758</strain>
    </source>
</reference>
<accession>A7FPB5</accession>
<name>RECF_YERP3</name>
<keyword id="KW-0067">ATP-binding</keyword>
<keyword id="KW-0963">Cytoplasm</keyword>
<keyword id="KW-0227">DNA damage</keyword>
<keyword id="KW-0234">DNA repair</keyword>
<keyword id="KW-0235">DNA replication</keyword>
<keyword id="KW-0238">DNA-binding</keyword>
<keyword id="KW-0547">Nucleotide-binding</keyword>
<keyword id="KW-0742">SOS response</keyword>
<evidence type="ECO:0000255" key="1">
    <source>
        <dbReference type="HAMAP-Rule" id="MF_00365"/>
    </source>
</evidence>
<protein>
    <recommendedName>
        <fullName evidence="1">DNA replication and repair protein RecF</fullName>
    </recommendedName>
</protein>
<comment type="function">
    <text evidence="1">The RecF protein is involved in DNA metabolism; it is required for DNA replication and normal SOS inducibility. RecF binds preferentially to single-stranded, linear DNA. It also seems to bind ATP.</text>
</comment>
<comment type="subcellular location">
    <subcellularLocation>
        <location evidence="1">Cytoplasm</location>
    </subcellularLocation>
</comment>
<comment type="similarity">
    <text evidence="1">Belongs to the RecF family.</text>
</comment>
<gene>
    <name evidence="1" type="primary">recF</name>
    <name type="ordered locus">YpsIP31758_4151</name>
</gene>
<dbReference type="EMBL" id="CP000720">
    <property type="protein sequence ID" value="ABS45957.1"/>
    <property type="molecule type" value="Genomic_DNA"/>
</dbReference>
<dbReference type="RefSeq" id="WP_012105977.1">
    <property type="nucleotide sequence ID" value="NC_009708.1"/>
</dbReference>
<dbReference type="SMR" id="A7FPB5"/>
<dbReference type="GeneID" id="96663437"/>
<dbReference type="KEGG" id="ypi:YpsIP31758_4151"/>
<dbReference type="HOGENOM" id="CLU_040267_0_0_6"/>
<dbReference type="Proteomes" id="UP000002412">
    <property type="component" value="Chromosome"/>
</dbReference>
<dbReference type="GO" id="GO:0005737">
    <property type="term" value="C:cytoplasm"/>
    <property type="evidence" value="ECO:0007669"/>
    <property type="project" value="UniProtKB-SubCell"/>
</dbReference>
<dbReference type="GO" id="GO:0005524">
    <property type="term" value="F:ATP binding"/>
    <property type="evidence" value="ECO:0007669"/>
    <property type="project" value="UniProtKB-UniRule"/>
</dbReference>
<dbReference type="GO" id="GO:0003697">
    <property type="term" value="F:single-stranded DNA binding"/>
    <property type="evidence" value="ECO:0007669"/>
    <property type="project" value="UniProtKB-UniRule"/>
</dbReference>
<dbReference type="GO" id="GO:0006260">
    <property type="term" value="P:DNA replication"/>
    <property type="evidence" value="ECO:0007669"/>
    <property type="project" value="UniProtKB-UniRule"/>
</dbReference>
<dbReference type="GO" id="GO:0000731">
    <property type="term" value="P:DNA synthesis involved in DNA repair"/>
    <property type="evidence" value="ECO:0007669"/>
    <property type="project" value="TreeGrafter"/>
</dbReference>
<dbReference type="GO" id="GO:0006302">
    <property type="term" value="P:double-strand break repair"/>
    <property type="evidence" value="ECO:0007669"/>
    <property type="project" value="TreeGrafter"/>
</dbReference>
<dbReference type="GO" id="GO:0009432">
    <property type="term" value="P:SOS response"/>
    <property type="evidence" value="ECO:0007669"/>
    <property type="project" value="UniProtKB-UniRule"/>
</dbReference>
<dbReference type="FunFam" id="1.20.1050.90:FF:000001">
    <property type="entry name" value="DNA replication and repair protein RecF"/>
    <property type="match status" value="1"/>
</dbReference>
<dbReference type="Gene3D" id="3.40.50.300">
    <property type="entry name" value="P-loop containing nucleotide triphosphate hydrolases"/>
    <property type="match status" value="1"/>
</dbReference>
<dbReference type="Gene3D" id="1.20.1050.90">
    <property type="entry name" value="RecF/RecN/SMC, N-terminal domain"/>
    <property type="match status" value="1"/>
</dbReference>
<dbReference type="HAMAP" id="MF_00365">
    <property type="entry name" value="RecF"/>
    <property type="match status" value="1"/>
</dbReference>
<dbReference type="InterPro" id="IPR001238">
    <property type="entry name" value="DNA-binding_RecF"/>
</dbReference>
<dbReference type="InterPro" id="IPR018078">
    <property type="entry name" value="DNA-binding_RecF_CS"/>
</dbReference>
<dbReference type="InterPro" id="IPR027417">
    <property type="entry name" value="P-loop_NTPase"/>
</dbReference>
<dbReference type="InterPro" id="IPR003395">
    <property type="entry name" value="RecF/RecN/SMC_N"/>
</dbReference>
<dbReference type="InterPro" id="IPR042174">
    <property type="entry name" value="RecF_2"/>
</dbReference>
<dbReference type="NCBIfam" id="TIGR00611">
    <property type="entry name" value="recf"/>
    <property type="match status" value="1"/>
</dbReference>
<dbReference type="PANTHER" id="PTHR32182">
    <property type="entry name" value="DNA REPLICATION AND REPAIR PROTEIN RECF"/>
    <property type="match status" value="1"/>
</dbReference>
<dbReference type="PANTHER" id="PTHR32182:SF0">
    <property type="entry name" value="DNA REPLICATION AND REPAIR PROTEIN RECF"/>
    <property type="match status" value="1"/>
</dbReference>
<dbReference type="Pfam" id="PF02463">
    <property type="entry name" value="SMC_N"/>
    <property type="match status" value="1"/>
</dbReference>
<dbReference type="SUPFAM" id="SSF52540">
    <property type="entry name" value="P-loop containing nucleoside triphosphate hydrolases"/>
    <property type="match status" value="1"/>
</dbReference>
<dbReference type="PROSITE" id="PS00617">
    <property type="entry name" value="RECF_1"/>
    <property type="match status" value="1"/>
</dbReference>
<dbReference type="PROSITE" id="PS00618">
    <property type="entry name" value="RECF_2"/>
    <property type="match status" value="1"/>
</dbReference>